<gene>
    <name evidence="1" type="primary">ruvC</name>
    <name type="ordered locus">PSPTO_3979</name>
</gene>
<feature type="chain" id="PRO_0000183123" description="Crossover junction endodeoxyribonuclease RuvC">
    <location>
        <begin position="1"/>
        <end position="176"/>
    </location>
</feature>
<feature type="active site" evidence="1">
    <location>
        <position position="8"/>
    </location>
</feature>
<feature type="active site" evidence="1">
    <location>
        <position position="69"/>
    </location>
</feature>
<feature type="active site" evidence="1">
    <location>
        <position position="141"/>
    </location>
</feature>
<feature type="binding site" evidence="1">
    <location>
        <position position="8"/>
    </location>
    <ligand>
        <name>Mg(2+)</name>
        <dbReference type="ChEBI" id="CHEBI:18420"/>
        <label>1</label>
    </ligand>
</feature>
<feature type="binding site" evidence="1">
    <location>
        <position position="69"/>
    </location>
    <ligand>
        <name>Mg(2+)</name>
        <dbReference type="ChEBI" id="CHEBI:18420"/>
        <label>2</label>
    </ligand>
</feature>
<feature type="binding site" evidence="1">
    <location>
        <position position="141"/>
    </location>
    <ligand>
        <name>Mg(2+)</name>
        <dbReference type="ChEBI" id="CHEBI:18420"/>
        <label>1</label>
    </ligand>
</feature>
<reference key="1">
    <citation type="journal article" date="2003" name="Proc. Natl. Acad. Sci. U.S.A.">
        <title>The complete genome sequence of the Arabidopsis and tomato pathogen Pseudomonas syringae pv. tomato DC3000.</title>
        <authorList>
            <person name="Buell C.R."/>
            <person name="Joardar V."/>
            <person name="Lindeberg M."/>
            <person name="Selengut J."/>
            <person name="Paulsen I.T."/>
            <person name="Gwinn M.L."/>
            <person name="Dodson R.J."/>
            <person name="DeBoy R.T."/>
            <person name="Durkin A.S."/>
            <person name="Kolonay J.F."/>
            <person name="Madupu R."/>
            <person name="Daugherty S.C."/>
            <person name="Brinkac L.M."/>
            <person name="Beanan M.J."/>
            <person name="Haft D.H."/>
            <person name="Nelson W.C."/>
            <person name="Davidsen T.M."/>
            <person name="Zafar N."/>
            <person name="Zhou L."/>
            <person name="Liu J."/>
            <person name="Yuan Q."/>
            <person name="Khouri H.M."/>
            <person name="Fedorova N.B."/>
            <person name="Tran B."/>
            <person name="Russell D."/>
            <person name="Berry K.J."/>
            <person name="Utterback T.R."/>
            <person name="Van Aken S.E."/>
            <person name="Feldblyum T.V."/>
            <person name="D'Ascenzo M."/>
            <person name="Deng W.-L."/>
            <person name="Ramos A.R."/>
            <person name="Alfano J.R."/>
            <person name="Cartinhour S."/>
            <person name="Chatterjee A.K."/>
            <person name="Delaney T.P."/>
            <person name="Lazarowitz S.G."/>
            <person name="Martin G.B."/>
            <person name="Schneider D.J."/>
            <person name="Tang X."/>
            <person name="Bender C.L."/>
            <person name="White O."/>
            <person name="Fraser C.M."/>
            <person name="Collmer A."/>
        </authorList>
    </citation>
    <scope>NUCLEOTIDE SEQUENCE [LARGE SCALE GENOMIC DNA]</scope>
    <source>
        <strain>ATCC BAA-871 / DC3000</strain>
    </source>
</reference>
<evidence type="ECO:0000255" key="1">
    <source>
        <dbReference type="HAMAP-Rule" id="MF_00034"/>
    </source>
</evidence>
<keyword id="KW-0963">Cytoplasm</keyword>
<keyword id="KW-0227">DNA damage</keyword>
<keyword id="KW-0233">DNA recombination</keyword>
<keyword id="KW-0234">DNA repair</keyword>
<keyword id="KW-0238">DNA-binding</keyword>
<keyword id="KW-0255">Endonuclease</keyword>
<keyword id="KW-0378">Hydrolase</keyword>
<keyword id="KW-0460">Magnesium</keyword>
<keyword id="KW-0479">Metal-binding</keyword>
<keyword id="KW-0540">Nuclease</keyword>
<keyword id="KW-1185">Reference proteome</keyword>
<name>RUVC_PSESM</name>
<organism>
    <name type="scientific">Pseudomonas syringae pv. tomato (strain ATCC BAA-871 / DC3000)</name>
    <dbReference type="NCBI Taxonomy" id="223283"/>
    <lineage>
        <taxon>Bacteria</taxon>
        <taxon>Pseudomonadati</taxon>
        <taxon>Pseudomonadota</taxon>
        <taxon>Gammaproteobacteria</taxon>
        <taxon>Pseudomonadales</taxon>
        <taxon>Pseudomonadaceae</taxon>
        <taxon>Pseudomonas</taxon>
    </lineage>
</organism>
<proteinExistence type="inferred from homology"/>
<sequence>MTLILGIDPGSRITGYGVVRDTGRGCVYVASGCIRTGTGSGELHERLQIVYRGVREVIKTYGPVTMGIEKVFMARNADSALKLGQARGAAIVAGAEEALEIAEYTATQVKQAVAGTGGANKEQVMMMVMHLLKLTQKPQIDASDALAIALCHAHTRSSLIPHGLGTARSRGGRLRL</sequence>
<accession>Q87Y33</accession>
<protein>
    <recommendedName>
        <fullName evidence="1">Crossover junction endodeoxyribonuclease RuvC</fullName>
        <ecNumber evidence="1">3.1.21.10</ecNumber>
    </recommendedName>
    <alternativeName>
        <fullName evidence="1">Holliday junction nuclease RuvC</fullName>
    </alternativeName>
    <alternativeName>
        <fullName evidence="1">Holliday junction resolvase RuvC</fullName>
    </alternativeName>
</protein>
<dbReference type="EC" id="3.1.21.10" evidence="1"/>
<dbReference type="EMBL" id="AE016853">
    <property type="protein sequence ID" value="AAO57438.1"/>
    <property type="molecule type" value="Genomic_DNA"/>
</dbReference>
<dbReference type="RefSeq" id="NP_793743.1">
    <property type="nucleotide sequence ID" value="NC_004578.1"/>
</dbReference>
<dbReference type="RefSeq" id="WP_011104812.1">
    <property type="nucleotide sequence ID" value="NC_004578.1"/>
</dbReference>
<dbReference type="SMR" id="Q87Y33"/>
<dbReference type="STRING" id="223283.PSPTO_3979"/>
<dbReference type="GeneID" id="1185655"/>
<dbReference type="KEGG" id="pst:PSPTO_3979"/>
<dbReference type="PATRIC" id="fig|223283.9.peg.4079"/>
<dbReference type="eggNOG" id="COG0817">
    <property type="taxonomic scope" value="Bacteria"/>
</dbReference>
<dbReference type="HOGENOM" id="CLU_091257_2_1_6"/>
<dbReference type="OrthoDB" id="9805499at2"/>
<dbReference type="PhylomeDB" id="Q87Y33"/>
<dbReference type="Proteomes" id="UP000002515">
    <property type="component" value="Chromosome"/>
</dbReference>
<dbReference type="GO" id="GO:0005737">
    <property type="term" value="C:cytoplasm"/>
    <property type="evidence" value="ECO:0007669"/>
    <property type="project" value="UniProtKB-SubCell"/>
</dbReference>
<dbReference type="GO" id="GO:0048476">
    <property type="term" value="C:Holliday junction resolvase complex"/>
    <property type="evidence" value="ECO:0007669"/>
    <property type="project" value="UniProtKB-UniRule"/>
</dbReference>
<dbReference type="GO" id="GO:0008821">
    <property type="term" value="F:crossover junction DNA endonuclease activity"/>
    <property type="evidence" value="ECO:0007669"/>
    <property type="project" value="UniProtKB-UniRule"/>
</dbReference>
<dbReference type="GO" id="GO:0003677">
    <property type="term" value="F:DNA binding"/>
    <property type="evidence" value="ECO:0007669"/>
    <property type="project" value="UniProtKB-KW"/>
</dbReference>
<dbReference type="GO" id="GO:0000287">
    <property type="term" value="F:magnesium ion binding"/>
    <property type="evidence" value="ECO:0007669"/>
    <property type="project" value="UniProtKB-UniRule"/>
</dbReference>
<dbReference type="GO" id="GO:0006310">
    <property type="term" value="P:DNA recombination"/>
    <property type="evidence" value="ECO:0007669"/>
    <property type="project" value="UniProtKB-UniRule"/>
</dbReference>
<dbReference type="GO" id="GO:0006281">
    <property type="term" value="P:DNA repair"/>
    <property type="evidence" value="ECO:0007669"/>
    <property type="project" value="UniProtKB-UniRule"/>
</dbReference>
<dbReference type="CDD" id="cd16962">
    <property type="entry name" value="RuvC"/>
    <property type="match status" value="1"/>
</dbReference>
<dbReference type="FunFam" id="3.30.420.10:FF:000002">
    <property type="entry name" value="Crossover junction endodeoxyribonuclease RuvC"/>
    <property type="match status" value="1"/>
</dbReference>
<dbReference type="Gene3D" id="3.30.420.10">
    <property type="entry name" value="Ribonuclease H-like superfamily/Ribonuclease H"/>
    <property type="match status" value="1"/>
</dbReference>
<dbReference type="HAMAP" id="MF_00034">
    <property type="entry name" value="RuvC"/>
    <property type="match status" value="1"/>
</dbReference>
<dbReference type="InterPro" id="IPR012337">
    <property type="entry name" value="RNaseH-like_sf"/>
</dbReference>
<dbReference type="InterPro" id="IPR036397">
    <property type="entry name" value="RNaseH_sf"/>
</dbReference>
<dbReference type="InterPro" id="IPR020563">
    <property type="entry name" value="X-over_junc_endoDNase_Mg_BS"/>
</dbReference>
<dbReference type="InterPro" id="IPR002176">
    <property type="entry name" value="X-over_junc_endoDNase_RuvC"/>
</dbReference>
<dbReference type="NCBIfam" id="TIGR00228">
    <property type="entry name" value="ruvC"/>
    <property type="match status" value="1"/>
</dbReference>
<dbReference type="PANTHER" id="PTHR30194">
    <property type="entry name" value="CROSSOVER JUNCTION ENDODEOXYRIBONUCLEASE RUVC"/>
    <property type="match status" value="1"/>
</dbReference>
<dbReference type="PANTHER" id="PTHR30194:SF3">
    <property type="entry name" value="CROSSOVER JUNCTION ENDODEOXYRIBONUCLEASE RUVC"/>
    <property type="match status" value="1"/>
</dbReference>
<dbReference type="Pfam" id="PF02075">
    <property type="entry name" value="RuvC"/>
    <property type="match status" value="1"/>
</dbReference>
<dbReference type="PRINTS" id="PR00696">
    <property type="entry name" value="RSOLVASERUVC"/>
</dbReference>
<dbReference type="SUPFAM" id="SSF53098">
    <property type="entry name" value="Ribonuclease H-like"/>
    <property type="match status" value="1"/>
</dbReference>
<dbReference type="PROSITE" id="PS01321">
    <property type="entry name" value="RUVC"/>
    <property type="match status" value="1"/>
</dbReference>
<comment type="function">
    <text evidence="1">The RuvA-RuvB-RuvC complex processes Holliday junction (HJ) DNA during genetic recombination and DNA repair. Endonuclease that resolves HJ intermediates. Cleaves cruciform DNA by making single-stranded nicks across the HJ at symmetrical positions within the homologous arms, yielding a 5'-phosphate and a 3'-hydroxyl group; requires a central core of homology in the junction. The consensus cleavage sequence is 5'-(A/T)TT(C/G)-3'. Cleavage occurs on the 3'-side of the TT dinucleotide at the point of strand exchange. HJ branch migration catalyzed by RuvA-RuvB allows RuvC to scan DNA until it finds its consensus sequence, where it cleaves and resolves the cruciform DNA.</text>
</comment>
<comment type="catalytic activity">
    <reaction evidence="1">
        <text>Endonucleolytic cleavage at a junction such as a reciprocal single-stranded crossover between two homologous DNA duplexes (Holliday junction).</text>
        <dbReference type="EC" id="3.1.21.10"/>
    </reaction>
</comment>
<comment type="cofactor">
    <cofactor evidence="1">
        <name>Mg(2+)</name>
        <dbReference type="ChEBI" id="CHEBI:18420"/>
    </cofactor>
    <text evidence="1">Binds 2 Mg(2+) ion per subunit.</text>
</comment>
<comment type="subunit">
    <text evidence="1">Homodimer which binds Holliday junction (HJ) DNA. The HJ becomes 2-fold symmetrical on binding to RuvC with unstacked arms; it has a different conformation from HJ DNA in complex with RuvA. In the full resolvosome a probable DNA-RuvA(4)-RuvB(12)-RuvC(2) complex forms which resolves the HJ.</text>
</comment>
<comment type="subcellular location">
    <subcellularLocation>
        <location evidence="1">Cytoplasm</location>
    </subcellularLocation>
</comment>
<comment type="similarity">
    <text evidence="1">Belongs to the RuvC family.</text>
</comment>